<keyword id="KW-0249">Electron transport</keyword>
<keyword id="KW-0349">Heme</keyword>
<keyword id="KW-0408">Iron</keyword>
<keyword id="KW-0472">Membrane</keyword>
<keyword id="KW-0479">Metal-binding</keyword>
<keyword id="KW-0602">Photosynthesis</keyword>
<keyword id="KW-0604">Photosystem II</keyword>
<keyword id="KW-0793">Thylakoid</keyword>
<keyword id="KW-0812">Transmembrane</keyword>
<keyword id="KW-1133">Transmembrane helix</keyword>
<keyword id="KW-0813">Transport</keyword>
<sequence>MAGGSTGERPFGDIITSIRYWVIHSITIPALFIAGWLFVSTGLAYDVFGTPRPNEYYTEQRQELPILSDRFESKQQIDDFIK</sequence>
<name>PSBE_TRIEI</name>
<dbReference type="EMBL" id="CP000393">
    <property type="protein sequence ID" value="ABG52594.1"/>
    <property type="molecule type" value="Genomic_DNA"/>
</dbReference>
<dbReference type="RefSeq" id="WP_011612936.1">
    <property type="nucleotide sequence ID" value="NC_008312.1"/>
</dbReference>
<dbReference type="SMR" id="Q10YT0"/>
<dbReference type="STRING" id="203124.Tery_3504"/>
<dbReference type="KEGG" id="ter:Tery_3504"/>
<dbReference type="eggNOG" id="ENOG5032RR6">
    <property type="taxonomic scope" value="Bacteria"/>
</dbReference>
<dbReference type="HOGENOM" id="CLU_194095_0_0_3"/>
<dbReference type="OrthoDB" id="514620at2"/>
<dbReference type="GO" id="GO:0009539">
    <property type="term" value="C:photosystem II reaction center"/>
    <property type="evidence" value="ECO:0007669"/>
    <property type="project" value="InterPro"/>
</dbReference>
<dbReference type="GO" id="GO:0031676">
    <property type="term" value="C:plasma membrane-derived thylakoid membrane"/>
    <property type="evidence" value="ECO:0007669"/>
    <property type="project" value="UniProtKB-SubCell"/>
</dbReference>
<dbReference type="GO" id="GO:0009055">
    <property type="term" value="F:electron transfer activity"/>
    <property type="evidence" value="ECO:0007669"/>
    <property type="project" value="UniProtKB-UniRule"/>
</dbReference>
<dbReference type="GO" id="GO:0020037">
    <property type="term" value="F:heme binding"/>
    <property type="evidence" value="ECO:0007669"/>
    <property type="project" value="InterPro"/>
</dbReference>
<dbReference type="GO" id="GO:0005506">
    <property type="term" value="F:iron ion binding"/>
    <property type="evidence" value="ECO:0007669"/>
    <property type="project" value="UniProtKB-UniRule"/>
</dbReference>
<dbReference type="GO" id="GO:0009767">
    <property type="term" value="P:photosynthetic electron transport chain"/>
    <property type="evidence" value="ECO:0007669"/>
    <property type="project" value="InterPro"/>
</dbReference>
<dbReference type="Gene3D" id="1.20.5.860">
    <property type="entry name" value="Photosystem II cytochrome b559, alpha subunit"/>
    <property type="match status" value="1"/>
</dbReference>
<dbReference type="HAMAP" id="MF_00642">
    <property type="entry name" value="PSII_PsbE"/>
    <property type="match status" value="1"/>
</dbReference>
<dbReference type="InterPro" id="IPR006217">
    <property type="entry name" value="PSII_cyt_b559_asu"/>
</dbReference>
<dbReference type="InterPro" id="IPR037025">
    <property type="entry name" value="PSII_cyt_b559_asu_sf"/>
</dbReference>
<dbReference type="InterPro" id="IPR006216">
    <property type="entry name" value="PSII_cyt_b559_CS"/>
</dbReference>
<dbReference type="InterPro" id="IPR013081">
    <property type="entry name" value="PSII_cyt_b559_N"/>
</dbReference>
<dbReference type="InterPro" id="IPR013082">
    <property type="entry name" value="PSII_cytb559_asu_lum"/>
</dbReference>
<dbReference type="NCBIfam" id="TIGR01332">
    <property type="entry name" value="cyt_b559_alpha"/>
    <property type="match status" value="1"/>
</dbReference>
<dbReference type="PANTHER" id="PTHR33391">
    <property type="entry name" value="CYTOCHROME B559 SUBUNIT BETA-RELATED"/>
    <property type="match status" value="1"/>
</dbReference>
<dbReference type="PANTHER" id="PTHR33391:SF9">
    <property type="entry name" value="CYTOCHROME B559 SUBUNIT BETA-RELATED"/>
    <property type="match status" value="1"/>
</dbReference>
<dbReference type="Pfam" id="PF00283">
    <property type="entry name" value="Cytochrom_B559"/>
    <property type="match status" value="1"/>
</dbReference>
<dbReference type="Pfam" id="PF00284">
    <property type="entry name" value="Cytochrom_B559a"/>
    <property type="match status" value="1"/>
</dbReference>
<dbReference type="PIRSF" id="PIRSF000036">
    <property type="entry name" value="PsbE"/>
    <property type="match status" value="1"/>
</dbReference>
<dbReference type="SUPFAM" id="SSF161045">
    <property type="entry name" value="Cytochrome b559 subunits"/>
    <property type="match status" value="1"/>
</dbReference>
<dbReference type="PROSITE" id="PS00537">
    <property type="entry name" value="CYTOCHROME_B559"/>
    <property type="match status" value="1"/>
</dbReference>
<organism>
    <name type="scientific">Trichodesmium erythraeum (strain IMS101)</name>
    <dbReference type="NCBI Taxonomy" id="203124"/>
    <lineage>
        <taxon>Bacteria</taxon>
        <taxon>Bacillati</taxon>
        <taxon>Cyanobacteriota</taxon>
        <taxon>Cyanophyceae</taxon>
        <taxon>Oscillatoriophycideae</taxon>
        <taxon>Oscillatoriales</taxon>
        <taxon>Microcoleaceae</taxon>
        <taxon>Trichodesmium</taxon>
    </lineage>
</organism>
<feature type="chain" id="PRO_1000056935" description="Cytochrome b559 subunit alpha">
    <location>
        <begin position="1"/>
        <end position="82"/>
    </location>
</feature>
<feature type="transmembrane region" description="Helical" evidence="1">
    <location>
        <begin position="22"/>
        <end position="36"/>
    </location>
</feature>
<feature type="binding site" description="axial binding residue" evidence="1">
    <location>
        <position position="24"/>
    </location>
    <ligand>
        <name>heme</name>
        <dbReference type="ChEBI" id="CHEBI:30413"/>
        <note>ligand shared with beta subunit</note>
    </ligand>
    <ligandPart>
        <name>Fe</name>
        <dbReference type="ChEBI" id="CHEBI:18248"/>
    </ligandPart>
</feature>
<proteinExistence type="inferred from homology"/>
<protein>
    <recommendedName>
        <fullName evidence="1">Cytochrome b559 subunit alpha</fullName>
    </recommendedName>
    <alternativeName>
        <fullName evidence="1">PSII reaction center subunit V</fullName>
    </alternativeName>
</protein>
<accession>Q10YT0</accession>
<reference key="1">
    <citation type="journal article" date="2015" name="Proc. Natl. Acad. Sci. U.S.A.">
        <title>Trichodesmium genome maintains abundant, widespread noncoding DNA in situ, despite oligotrophic lifestyle.</title>
        <authorList>
            <person name="Walworth N."/>
            <person name="Pfreundt U."/>
            <person name="Nelson W.C."/>
            <person name="Mincer T."/>
            <person name="Heidelberg J.F."/>
            <person name="Fu F."/>
            <person name="Waterbury J.B."/>
            <person name="Glavina del Rio T."/>
            <person name="Goodwin L."/>
            <person name="Kyrpides N.C."/>
            <person name="Land M.L."/>
            <person name="Woyke T."/>
            <person name="Hutchins D.A."/>
            <person name="Hess W.R."/>
            <person name="Webb E.A."/>
        </authorList>
    </citation>
    <scope>NUCLEOTIDE SEQUENCE [LARGE SCALE GENOMIC DNA]</scope>
    <source>
        <strain>IMS101</strain>
    </source>
</reference>
<gene>
    <name evidence="1" type="primary">psbE</name>
    <name type="ordered locus">Tery_3504</name>
</gene>
<evidence type="ECO:0000255" key="1">
    <source>
        <dbReference type="HAMAP-Rule" id="MF_00642"/>
    </source>
</evidence>
<comment type="function">
    <text evidence="1">This b-type cytochrome is tightly associated with the reaction center of photosystem II (PSII). PSII is a light-driven water:plastoquinone oxidoreductase that uses light energy to abstract electrons from H(2)O, generating O(2) and a proton gradient subsequently used for ATP formation. It consists of a core antenna complex that captures photons, and an electron transfer chain that converts photonic excitation into a charge separation.</text>
</comment>
<comment type="cofactor">
    <cofactor evidence="1">
        <name>heme b</name>
        <dbReference type="ChEBI" id="CHEBI:60344"/>
    </cofactor>
    <text evidence="1">With its partner (PsbF) binds heme. PSII binds additional chlorophylls, carotenoids and specific lipids.</text>
</comment>
<comment type="subunit">
    <text evidence="1">Heterodimer of an alpha subunit and a beta subunit. PSII is composed of 1 copy each of membrane proteins PsbA, PsbB, PsbC, PsbD, PsbE, PsbF, PsbH, PsbI, PsbJ, PsbK, PsbL, PsbM, PsbT, PsbX, PsbY, PsbZ, Psb30/Ycf12, peripheral proteins PsbO, CyanoQ (PsbQ), PsbU, PsbV and a large number of cofactors. It forms dimeric complexes.</text>
</comment>
<comment type="subcellular location">
    <subcellularLocation>
        <location evidence="1">Cellular thylakoid membrane</location>
        <topology evidence="1">Single-pass membrane protein</topology>
    </subcellularLocation>
</comment>
<comment type="similarity">
    <text evidence="1">Belongs to the PsbE/PsbF family.</text>
</comment>